<evidence type="ECO:0000255" key="1">
    <source>
        <dbReference type="HAMAP-Rule" id="MF_01371"/>
    </source>
</evidence>
<evidence type="ECO:0000305" key="2"/>
<dbReference type="EMBL" id="CP000453">
    <property type="protein sequence ID" value="ABI55830.1"/>
    <property type="molecule type" value="Genomic_DNA"/>
</dbReference>
<dbReference type="RefSeq" id="WP_011628225.1">
    <property type="nucleotide sequence ID" value="NC_008340.1"/>
</dbReference>
<dbReference type="SMR" id="Q0ABF7"/>
<dbReference type="KEGG" id="aeh:Mlg_0476"/>
<dbReference type="eggNOG" id="COG1841">
    <property type="taxonomic scope" value="Bacteria"/>
</dbReference>
<dbReference type="HOGENOM" id="CLU_131047_1_4_6"/>
<dbReference type="OrthoDB" id="9812790at2"/>
<dbReference type="Proteomes" id="UP000001962">
    <property type="component" value="Chromosome"/>
</dbReference>
<dbReference type="GO" id="GO:0022625">
    <property type="term" value="C:cytosolic large ribosomal subunit"/>
    <property type="evidence" value="ECO:0007669"/>
    <property type="project" value="TreeGrafter"/>
</dbReference>
<dbReference type="GO" id="GO:0003735">
    <property type="term" value="F:structural constituent of ribosome"/>
    <property type="evidence" value="ECO:0007669"/>
    <property type="project" value="InterPro"/>
</dbReference>
<dbReference type="GO" id="GO:0006412">
    <property type="term" value="P:translation"/>
    <property type="evidence" value="ECO:0007669"/>
    <property type="project" value="UniProtKB-UniRule"/>
</dbReference>
<dbReference type="CDD" id="cd01658">
    <property type="entry name" value="Ribosomal_L30"/>
    <property type="match status" value="1"/>
</dbReference>
<dbReference type="FunFam" id="3.30.1390.20:FF:000001">
    <property type="entry name" value="50S ribosomal protein L30"/>
    <property type="match status" value="1"/>
</dbReference>
<dbReference type="Gene3D" id="3.30.1390.20">
    <property type="entry name" value="Ribosomal protein L30, ferredoxin-like fold domain"/>
    <property type="match status" value="1"/>
</dbReference>
<dbReference type="HAMAP" id="MF_01371_B">
    <property type="entry name" value="Ribosomal_uL30_B"/>
    <property type="match status" value="1"/>
</dbReference>
<dbReference type="InterPro" id="IPR036919">
    <property type="entry name" value="Ribo_uL30_ferredoxin-like_sf"/>
</dbReference>
<dbReference type="InterPro" id="IPR005996">
    <property type="entry name" value="Ribosomal_uL30_bac-type"/>
</dbReference>
<dbReference type="InterPro" id="IPR016082">
    <property type="entry name" value="Ribosomal_uL30_ferredoxin-like"/>
</dbReference>
<dbReference type="NCBIfam" id="TIGR01308">
    <property type="entry name" value="rpmD_bact"/>
    <property type="match status" value="1"/>
</dbReference>
<dbReference type="PANTHER" id="PTHR15892:SF2">
    <property type="entry name" value="LARGE RIBOSOMAL SUBUNIT PROTEIN UL30M"/>
    <property type="match status" value="1"/>
</dbReference>
<dbReference type="PANTHER" id="PTHR15892">
    <property type="entry name" value="MITOCHONDRIAL RIBOSOMAL PROTEIN L30"/>
    <property type="match status" value="1"/>
</dbReference>
<dbReference type="Pfam" id="PF00327">
    <property type="entry name" value="Ribosomal_L30"/>
    <property type="match status" value="1"/>
</dbReference>
<dbReference type="PIRSF" id="PIRSF002211">
    <property type="entry name" value="Ribosomal_L30_bac-type"/>
    <property type="match status" value="1"/>
</dbReference>
<dbReference type="SUPFAM" id="SSF55129">
    <property type="entry name" value="Ribosomal protein L30p/L7e"/>
    <property type="match status" value="1"/>
</dbReference>
<comment type="subunit">
    <text evidence="1">Part of the 50S ribosomal subunit.</text>
</comment>
<comment type="similarity">
    <text evidence="1">Belongs to the universal ribosomal protein uL30 family.</text>
</comment>
<name>RL30_ALKEH</name>
<organism>
    <name type="scientific">Alkalilimnicola ehrlichii (strain ATCC BAA-1101 / DSM 17681 / MLHE-1)</name>
    <dbReference type="NCBI Taxonomy" id="187272"/>
    <lineage>
        <taxon>Bacteria</taxon>
        <taxon>Pseudomonadati</taxon>
        <taxon>Pseudomonadota</taxon>
        <taxon>Gammaproteobacteria</taxon>
        <taxon>Chromatiales</taxon>
        <taxon>Ectothiorhodospiraceae</taxon>
        <taxon>Alkalilimnicola</taxon>
    </lineage>
</organism>
<reference key="1">
    <citation type="submission" date="2006-08" db="EMBL/GenBank/DDBJ databases">
        <title>Complete sequence of Alkalilimnicola ehrilichei MLHE-1.</title>
        <authorList>
            <person name="Copeland A."/>
            <person name="Lucas S."/>
            <person name="Lapidus A."/>
            <person name="Barry K."/>
            <person name="Detter J.C."/>
            <person name="Glavina del Rio T."/>
            <person name="Hammon N."/>
            <person name="Israni S."/>
            <person name="Dalin E."/>
            <person name="Tice H."/>
            <person name="Pitluck S."/>
            <person name="Sims D."/>
            <person name="Brettin T."/>
            <person name="Bruce D."/>
            <person name="Han C."/>
            <person name="Tapia R."/>
            <person name="Gilna P."/>
            <person name="Schmutz J."/>
            <person name="Larimer F."/>
            <person name="Land M."/>
            <person name="Hauser L."/>
            <person name="Kyrpides N."/>
            <person name="Mikhailova N."/>
            <person name="Oremland R.S."/>
            <person name="Hoeft S.E."/>
            <person name="Switzer-Blum J."/>
            <person name="Kulp T."/>
            <person name="King G."/>
            <person name="Tabita R."/>
            <person name="Witte B."/>
            <person name="Santini J.M."/>
            <person name="Basu P."/>
            <person name="Hollibaugh J.T."/>
            <person name="Xie G."/>
            <person name="Stolz J.F."/>
            <person name="Richardson P."/>
        </authorList>
    </citation>
    <scope>NUCLEOTIDE SEQUENCE [LARGE SCALE GENOMIC DNA]</scope>
    <source>
        <strain>ATCC BAA-1101 / DSM 17681 / MLHE-1</strain>
    </source>
</reference>
<proteinExistence type="inferred from homology"/>
<feature type="chain" id="PRO_0000273738" description="Large ribosomal subunit protein uL30">
    <location>
        <begin position="1"/>
        <end position="62"/>
    </location>
</feature>
<sequence>MTTQKQLKVTQKRSTVGRIASHKACVAGLGLRRINHSVVVADTPENRGMINKVAYLLEVEEC</sequence>
<protein>
    <recommendedName>
        <fullName evidence="1">Large ribosomal subunit protein uL30</fullName>
    </recommendedName>
    <alternativeName>
        <fullName evidence="2">50S ribosomal protein L30</fullName>
    </alternativeName>
</protein>
<keyword id="KW-1185">Reference proteome</keyword>
<keyword id="KW-0687">Ribonucleoprotein</keyword>
<keyword id="KW-0689">Ribosomal protein</keyword>
<gene>
    <name evidence="1" type="primary">rpmD</name>
    <name type="ordered locus">Mlg_0476</name>
</gene>
<accession>Q0ABF7</accession>